<feature type="transit peptide" description="Mitochondrion" evidence="3">
    <location>
        <begin position="1"/>
        <end status="unknown"/>
    </location>
</feature>
<feature type="chain" id="PRO_0000045418" description="Protoheme IX farnesyltransferase, mitochondrial">
    <location>
        <begin status="unknown"/>
        <end position="552"/>
    </location>
</feature>
<feature type="transmembrane region" description="Helical" evidence="3">
    <location>
        <begin position="215"/>
        <end position="235"/>
    </location>
</feature>
<feature type="transmembrane region" description="Helical" evidence="3">
    <location>
        <begin position="245"/>
        <end position="267"/>
    </location>
</feature>
<feature type="transmembrane region" description="Helical" evidence="3">
    <location>
        <begin position="296"/>
        <end position="316"/>
    </location>
</feature>
<feature type="transmembrane region" description="Helical" evidence="3">
    <location>
        <begin position="318"/>
        <end position="338"/>
    </location>
</feature>
<feature type="transmembrane region" description="Helical" evidence="3">
    <location>
        <begin position="346"/>
        <end position="366"/>
    </location>
</feature>
<feature type="transmembrane region" description="Helical" evidence="3">
    <location>
        <begin position="387"/>
        <end position="407"/>
    </location>
</feature>
<feature type="transmembrane region" description="Helical" evidence="3">
    <location>
        <begin position="441"/>
        <end position="461"/>
    </location>
</feature>
<feature type="transmembrane region" description="Helical" evidence="3">
    <location>
        <begin position="487"/>
        <end position="507"/>
    </location>
</feature>
<feature type="region of interest" description="Disordered" evidence="4">
    <location>
        <begin position="118"/>
        <end position="185"/>
    </location>
</feature>
<feature type="compositionally biased region" description="Low complexity" evidence="4">
    <location>
        <begin position="150"/>
        <end position="168"/>
    </location>
</feature>
<keyword id="KW-0350">Heme biosynthesis</keyword>
<keyword id="KW-0472">Membrane</keyword>
<keyword id="KW-0496">Mitochondrion</keyword>
<keyword id="KW-1185">Reference proteome</keyword>
<keyword id="KW-0808">Transferase</keyword>
<keyword id="KW-0809">Transit peptide</keyword>
<keyword id="KW-0812">Transmembrane</keyword>
<keyword id="KW-1133">Transmembrane helix</keyword>
<comment type="function">
    <text evidence="1">Converts protoheme IX and farnesyl diphosphate to heme O.</text>
</comment>
<comment type="catalytic activity">
    <reaction evidence="2">
        <text>heme b + (2E,6E)-farnesyl diphosphate + H2O = Fe(II)-heme o + diphosphate</text>
        <dbReference type="Rhea" id="RHEA:28070"/>
        <dbReference type="ChEBI" id="CHEBI:15377"/>
        <dbReference type="ChEBI" id="CHEBI:33019"/>
        <dbReference type="ChEBI" id="CHEBI:60344"/>
        <dbReference type="ChEBI" id="CHEBI:60530"/>
        <dbReference type="ChEBI" id="CHEBI:175763"/>
        <dbReference type="EC" id="2.5.1.141"/>
    </reaction>
</comment>
<comment type="subcellular location">
    <subcellularLocation>
        <location evidence="1">Mitochondrion membrane</location>
        <topology evidence="1">Multi-pass membrane protein</topology>
    </subcellularLocation>
</comment>
<comment type="similarity">
    <text evidence="5">Belongs to the UbiA prenyltransferase family.</text>
</comment>
<evidence type="ECO:0000250" key="1"/>
<evidence type="ECO:0000250" key="2">
    <source>
        <dbReference type="UniProtKB" id="P24009"/>
    </source>
</evidence>
<evidence type="ECO:0000255" key="3"/>
<evidence type="ECO:0000256" key="4">
    <source>
        <dbReference type="SAM" id="MobiDB-lite"/>
    </source>
</evidence>
<evidence type="ECO:0000305" key="5"/>
<protein>
    <recommendedName>
        <fullName>Protoheme IX farnesyltransferase, mitochondrial</fullName>
        <ecNumber evidence="2">2.5.1.141</ecNumber>
    </recommendedName>
    <alternativeName>
        <fullName>Heme O synthase</fullName>
    </alternativeName>
</protein>
<organism>
    <name type="scientific">Pyricularia oryzae (strain 70-15 / ATCC MYA-4617 / FGSC 8958)</name>
    <name type="common">Rice blast fungus</name>
    <name type="synonym">Magnaporthe oryzae</name>
    <dbReference type="NCBI Taxonomy" id="242507"/>
    <lineage>
        <taxon>Eukaryota</taxon>
        <taxon>Fungi</taxon>
        <taxon>Dikarya</taxon>
        <taxon>Ascomycota</taxon>
        <taxon>Pezizomycotina</taxon>
        <taxon>Sordariomycetes</taxon>
        <taxon>Sordariomycetidae</taxon>
        <taxon>Magnaporthales</taxon>
        <taxon>Pyriculariaceae</taxon>
        <taxon>Pyricularia</taxon>
    </lineage>
</organism>
<dbReference type="EC" id="2.5.1.141" evidence="2"/>
<dbReference type="EMBL" id="CM001233">
    <property type="protein sequence ID" value="EHA51972.1"/>
    <property type="molecule type" value="Genomic_DNA"/>
</dbReference>
<dbReference type="RefSeq" id="XP_003711779.1">
    <property type="nucleotide sequence ID" value="XM_003711731.1"/>
</dbReference>
<dbReference type="SMR" id="P0C150"/>
<dbReference type="FunCoup" id="P0C150">
    <property type="interactions" value="808"/>
</dbReference>
<dbReference type="STRING" id="242507.P0C150"/>
<dbReference type="EnsemblFungi" id="MGG_05944T0">
    <property type="protein sequence ID" value="MGG_05944T0"/>
    <property type="gene ID" value="MGG_05944"/>
</dbReference>
<dbReference type="GeneID" id="2684031"/>
<dbReference type="KEGG" id="mgr:MGG_05944"/>
<dbReference type="VEuPathDB" id="FungiDB:MGG_05944"/>
<dbReference type="eggNOG" id="KOG1380">
    <property type="taxonomic scope" value="Eukaryota"/>
</dbReference>
<dbReference type="HOGENOM" id="CLU_029631_2_0_1"/>
<dbReference type="InParanoid" id="P0C150"/>
<dbReference type="OMA" id="TSAYGMY"/>
<dbReference type="OrthoDB" id="5211at2759"/>
<dbReference type="Proteomes" id="UP000009058">
    <property type="component" value="Chromosome 3"/>
</dbReference>
<dbReference type="GO" id="GO:0031966">
    <property type="term" value="C:mitochondrial membrane"/>
    <property type="evidence" value="ECO:0007669"/>
    <property type="project" value="UniProtKB-SubCell"/>
</dbReference>
<dbReference type="GO" id="GO:0008495">
    <property type="term" value="F:protoheme IX farnesyltransferase activity"/>
    <property type="evidence" value="ECO:0007669"/>
    <property type="project" value="UniProtKB-EC"/>
</dbReference>
<dbReference type="GO" id="GO:0006784">
    <property type="term" value="P:heme A biosynthetic process"/>
    <property type="evidence" value="ECO:0007669"/>
    <property type="project" value="TreeGrafter"/>
</dbReference>
<dbReference type="CDD" id="cd13957">
    <property type="entry name" value="PT_UbiA_Cox10"/>
    <property type="match status" value="1"/>
</dbReference>
<dbReference type="FunFam" id="1.10.357.140:FF:000004">
    <property type="entry name" value="Protoheme IX farnesyltransferase, mitochondrial"/>
    <property type="match status" value="1"/>
</dbReference>
<dbReference type="Gene3D" id="1.10.357.140">
    <property type="entry name" value="UbiA prenyltransferase"/>
    <property type="match status" value="1"/>
</dbReference>
<dbReference type="HAMAP" id="MF_00154">
    <property type="entry name" value="CyoE_CtaB"/>
    <property type="match status" value="1"/>
</dbReference>
<dbReference type="InterPro" id="IPR006369">
    <property type="entry name" value="Protohaem_IX_farnesylTrfase"/>
</dbReference>
<dbReference type="InterPro" id="IPR016315">
    <property type="entry name" value="Protohaem_IX_farnesylTrfase_mt"/>
</dbReference>
<dbReference type="InterPro" id="IPR000537">
    <property type="entry name" value="UbiA_prenyltransferase"/>
</dbReference>
<dbReference type="InterPro" id="IPR030470">
    <property type="entry name" value="UbiA_prenylTrfase_CS"/>
</dbReference>
<dbReference type="InterPro" id="IPR044878">
    <property type="entry name" value="UbiA_sf"/>
</dbReference>
<dbReference type="NCBIfam" id="TIGR01473">
    <property type="entry name" value="cyoE_ctaB"/>
    <property type="match status" value="1"/>
</dbReference>
<dbReference type="PANTHER" id="PTHR43448">
    <property type="entry name" value="PROTOHEME IX FARNESYLTRANSFERASE, MITOCHONDRIAL"/>
    <property type="match status" value="1"/>
</dbReference>
<dbReference type="PANTHER" id="PTHR43448:SF2">
    <property type="entry name" value="PROTOHEME IX FARNESYLTRANSFERASE, MITOCHONDRIAL"/>
    <property type="match status" value="1"/>
</dbReference>
<dbReference type="Pfam" id="PF01040">
    <property type="entry name" value="UbiA"/>
    <property type="match status" value="1"/>
</dbReference>
<dbReference type="PIRSF" id="PIRSF001773">
    <property type="entry name" value="COX10"/>
    <property type="match status" value="1"/>
</dbReference>
<dbReference type="PROSITE" id="PS00943">
    <property type="entry name" value="UBIA"/>
    <property type="match status" value="1"/>
</dbReference>
<sequence length="552" mass="58840">MPGPRASLPSLSAVDNVCWRCCSSSSGRPVPGQRLRGFAIANQARPLSTSPVRPLRFGATTTVRAAASQSPRPNGAYFLSNVLLERFGGFQFSPRSRAIAGTSGSNISNTKRNATVAAADIPPSTSTPRPQVDEELPPHRRRQAARRTAEQAASASSNAPSEAAQTTPVTPPPAAPSGEIPPDASSILSNAAAAQPAQSLRRRLTTLLALSKPRLTMLVVLSAMVPYALYPVPDFLTPGVSAPSLSPLTLLFLTTGTTLCSAAANALNMIYEPKTDALMSRTRTRPLVRNLVTTRAAVCFALFCATTGILALQFGVNPTVAFLGAANIVLYAGIYTPLKRVSALNTWVGAVVGGIPPLMGWAAAAGESAVGDGSWRELLLAPDGSSAGGWLFAALLFTWQFPHFMALSWGVRDEYRAAGLRMLAWTNPARNARVALRYGLVFVPLCVGLCAVGVTEWSFAVTSLPVNLWLARESIRFWQTQGAAGSARGLFWASVWHLPVVMVLALLQKKGMWGRVWRSVFGEPDLDDDLASDDGWEYLDESEEPPAVTTRS</sequence>
<name>COX10_PYRO7</name>
<proteinExistence type="inferred from homology"/>
<gene>
    <name type="primary">COX10</name>
    <name type="ORF">MGG_05944</name>
</gene>
<accession>P0C150</accession>
<accession>A4QWN3</accession>
<accession>G4N4A4</accession>
<reference key="1">
    <citation type="journal article" date="2005" name="Nature">
        <title>The genome sequence of the rice blast fungus Magnaporthe grisea.</title>
        <authorList>
            <person name="Dean R.A."/>
            <person name="Talbot N.J."/>
            <person name="Ebbole D.J."/>
            <person name="Farman M.L."/>
            <person name="Mitchell T.K."/>
            <person name="Orbach M.J."/>
            <person name="Thon M.R."/>
            <person name="Kulkarni R."/>
            <person name="Xu J.-R."/>
            <person name="Pan H."/>
            <person name="Read N.D."/>
            <person name="Lee Y.-H."/>
            <person name="Carbone I."/>
            <person name="Brown D."/>
            <person name="Oh Y.Y."/>
            <person name="Donofrio N."/>
            <person name="Jeong J.S."/>
            <person name="Soanes D.M."/>
            <person name="Djonovic S."/>
            <person name="Kolomiets E."/>
            <person name="Rehmeyer C."/>
            <person name="Li W."/>
            <person name="Harding M."/>
            <person name="Kim S."/>
            <person name="Lebrun M.-H."/>
            <person name="Bohnert H."/>
            <person name="Coughlan S."/>
            <person name="Butler J."/>
            <person name="Calvo S.E."/>
            <person name="Ma L.-J."/>
            <person name="Nicol R."/>
            <person name="Purcell S."/>
            <person name="Nusbaum C."/>
            <person name="Galagan J.E."/>
            <person name="Birren B.W."/>
        </authorList>
    </citation>
    <scope>NUCLEOTIDE SEQUENCE [LARGE SCALE GENOMIC DNA]</scope>
    <source>
        <strain>70-15 / ATCC MYA-4617 / FGSC 8958</strain>
    </source>
</reference>